<organism>
    <name type="scientific">Nostoc sp. (strain PCC 7120 / SAG 25.82 / UTEX 2576)</name>
    <dbReference type="NCBI Taxonomy" id="103690"/>
    <lineage>
        <taxon>Bacteria</taxon>
        <taxon>Bacillati</taxon>
        <taxon>Cyanobacteriota</taxon>
        <taxon>Cyanophyceae</taxon>
        <taxon>Nostocales</taxon>
        <taxon>Nostocaceae</taxon>
        <taxon>Nostoc</taxon>
    </lineage>
</organism>
<proteinExistence type="inferred from homology"/>
<name>MNMA_NOSS1</name>
<reference key="1">
    <citation type="journal article" date="2001" name="DNA Res.">
        <title>Complete genomic sequence of the filamentous nitrogen-fixing cyanobacterium Anabaena sp. strain PCC 7120.</title>
        <authorList>
            <person name="Kaneko T."/>
            <person name="Nakamura Y."/>
            <person name="Wolk C.P."/>
            <person name="Kuritz T."/>
            <person name="Sasamoto S."/>
            <person name="Watanabe A."/>
            <person name="Iriguchi M."/>
            <person name="Ishikawa A."/>
            <person name="Kawashima K."/>
            <person name="Kimura T."/>
            <person name="Kishida Y."/>
            <person name="Kohara M."/>
            <person name="Matsumoto M."/>
            <person name="Matsuno A."/>
            <person name="Muraki A."/>
            <person name="Nakazaki N."/>
            <person name="Shimpo S."/>
            <person name="Sugimoto M."/>
            <person name="Takazawa M."/>
            <person name="Yamada M."/>
            <person name="Yasuda M."/>
            <person name="Tabata S."/>
        </authorList>
    </citation>
    <scope>NUCLEOTIDE SEQUENCE [LARGE SCALE GENOMIC DNA]</scope>
    <source>
        <strain>PCC 7120 / SAG 25.82 / UTEX 2576</strain>
    </source>
</reference>
<keyword id="KW-0067">ATP-binding</keyword>
<keyword id="KW-0963">Cytoplasm</keyword>
<keyword id="KW-1015">Disulfide bond</keyword>
<keyword id="KW-0547">Nucleotide-binding</keyword>
<keyword id="KW-1185">Reference proteome</keyword>
<keyword id="KW-0694">RNA-binding</keyword>
<keyword id="KW-0808">Transferase</keyword>
<keyword id="KW-0819">tRNA processing</keyword>
<keyword id="KW-0820">tRNA-binding</keyword>
<evidence type="ECO:0000255" key="1">
    <source>
        <dbReference type="HAMAP-Rule" id="MF_00144"/>
    </source>
</evidence>
<accession>Q8YX56</accession>
<sequence>MKKVVVGLSGGVDSSTAAAILHNQGYEVIGLTLWLMKGKGQCCSEGMIDAAYICEQLGIPHEVVDMRDVFQTHIVDYLVTGYGAGITPLPCSQCNKTVKFGPMVQYASEKLGCDRIATGHYARIRYDEATGRYQLLRAVDRNKDQSYFLYDLSQDLLAASLFPLGEMEKADTRRIATEHGLKTADKPESQDLCLVESNGSMRAFLDKYIAPKKGDIVDTAGKVLGQHDGVHHYTIGQRKGLGIAAPEPLYVVELDAVHNKVVVGDRTKATQEECTVNRVNWVSIAEPSTPIRAAVQIRYRSAPEPVTVIPLENSRVRLVFDEPQFSITPGQAAVWYDGNKVLGGGIIEQFSK</sequence>
<feature type="chain" id="PRO_0000121600" description="tRNA-specific 2-thiouridylase MnmA">
    <location>
        <begin position="1"/>
        <end position="352"/>
    </location>
</feature>
<feature type="region of interest" description="Interaction with tRNA" evidence="1">
    <location>
        <begin position="143"/>
        <end position="145"/>
    </location>
</feature>
<feature type="region of interest" description="Interaction with tRNA" evidence="1">
    <location>
        <begin position="298"/>
        <end position="299"/>
    </location>
</feature>
<feature type="active site" description="Nucleophile" evidence="1">
    <location>
        <position position="94"/>
    </location>
</feature>
<feature type="active site" description="Cysteine persulfide intermediate" evidence="1">
    <location>
        <position position="193"/>
    </location>
</feature>
<feature type="binding site" evidence="1">
    <location>
        <begin position="7"/>
        <end position="14"/>
    </location>
    <ligand>
        <name>ATP</name>
        <dbReference type="ChEBI" id="CHEBI:30616"/>
    </ligand>
</feature>
<feature type="binding site" evidence="1">
    <location>
        <position position="33"/>
    </location>
    <ligand>
        <name>ATP</name>
        <dbReference type="ChEBI" id="CHEBI:30616"/>
    </ligand>
</feature>
<feature type="binding site" evidence="1">
    <location>
        <position position="119"/>
    </location>
    <ligand>
        <name>ATP</name>
        <dbReference type="ChEBI" id="CHEBI:30616"/>
    </ligand>
</feature>
<feature type="site" description="Interaction with tRNA" evidence="1">
    <location>
        <position position="120"/>
    </location>
</feature>
<feature type="site" description="Interaction with tRNA" evidence="1">
    <location>
        <position position="331"/>
    </location>
</feature>
<feature type="disulfide bond" description="Alternate" evidence="1">
    <location>
        <begin position="94"/>
        <end position="193"/>
    </location>
</feature>
<comment type="function">
    <text evidence="1">Catalyzes the 2-thiolation of uridine at the wobble position (U34) of tRNA, leading to the formation of s(2)U34.</text>
</comment>
<comment type="catalytic activity">
    <reaction evidence="1">
        <text>S-sulfanyl-L-cysteinyl-[protein] + uridine(34) in tRNA + AH2 + ATP = 2-thiouridine(34) in tRNA + L-cysteinyl-[protein] + A + AMP + diphosphate + H(+)</text>
        <dbReference type="Rhea" id="RHEA:47032"/>
        <dbReference type="Rhea" id="RHEA-COMP:10131"/>
        <dbReference type="Rhea" id="RHEA-COMP:11726"/>
        <dbReference type="Rhea" id="RHEA-COMP:11727"/>
        <dbReference type="Rhea" id="RHEA-COMP:11728"/>
        <dbReference type="ChEBI" id="CHEBI:13193"/>
        <dbReference type="ChEBI" id="CHEBI:15378"/>
        <dbReference type="ChEBI" id="CHEBI:17499"/>
        <dbReference type="ChEBI" id="CHEBI:29950"/>
        <dbReference type="ChEBI" id="CHEBI:30616"/>
        <dbReference type="ChEBI" id="CHEBI:33019"/>
        <dbReference type="ChEBI" id="CHEBI:61963"/>
        <dbReference type="ChEBI" id="CHEBI:65315"/>
        <dbReference type="ChEBI" id="CHEBI:87170"/>
        <dbReference type="ChEBI" id="CHEBI:456215"/>
        <dbReference type="EC" id="2.8.1.13"/>
    </reaction>
</comment>
<comment type="subcellular location">
    <subcellularLocation>
        <location evidence="1">Cytoplasm</location>
    </subcellularLocation>
</comment>
<comment type="similarity">
    <text evidence="1">Belongs to the MnmA/TRMU family.</text>
</comment>
<dbReference type="EC" id="2.8.1.13" evidence="1"/>
<dbReference type="EMBL" id="BA000019">
    <property type="protein sequence ID" value="BAB73316.1"/>
    <property type="molecule type" value="Genomic_DNA"/>
</dbReference>
<dbReference type="PIR" id="AD1976">
    <property type="entry name" value="AD1976"/>
</dbReference>
<dbReference type="RefSeq" id="WP_010995531.1">
    <property type="nucleotide sequence ID" value="NZ_RSCN01000029.1"/>
</dbReference>
<dbReference type="SMR" id="Q8YX56"/>
<dbReference type="STRING" id="103690.gene:10493374"/>
<dbReference type="KEGG" id="ana:all1359"/>
<dbReference type="eggNOG" id="COG0482">
    <property type="taxonomic scope" value="Bacteria"/>
</dbReference>
<dbReference type="OrthoDB" id="9800696at2"/>
<dbReference type="Proteomes" id="UP000002483">
    <property type="component" value="Chromosome"/>
</dbReference>
<dbReference type="GO" id="GO:0005737">
    <property type="term" value="C:cytoplasm"/>
    <property type="evidence" value="ECO:0007669"/>
    <property type="project" value="UniProtKB-SubCell"/>
</dbReference>
<dbReference type="GO" id="GO:0005524">
    <property type="term" value="F:ATP binding"/>
    <property type="evidence" value="ECO:0007669"/>
    <property type="project" value="UniProtKB-KW"/>
</dbReference>
<dbReference type="GO" id="GO:0000049">
    <property type="term" value="F:tRNA binding"/>
    <property type="evidence" value="ECO:0007669"/>
    <property type="project" value="UniProtKB-KW"/>
</dbReference>
<dbReference type="GO" id="GO:0103016">
    <property type="term" value="F:tRNA-uridine 2-sulfurtransferase activity"/>
    <property type="evidence" value="ECO:0007669"/>
    <property type="project" value="UniProtKB-EC"/>
</dbReference>
<dbReference type="GO" id="GO:0002143">
    <property type="term" value="P:tRNA wobble position uridine thiolation"/>
    <property type="evidence" value="ECO:0007669"/>
    <property type="project" value="TreeGrafter"/>
</dbReference>
<dbReference type="CDD" id="cd01998">
    <property type="entry name" value="MnmA_TRMU-like"/>
    <property type="match status" value="1"/>
</dbReference>
<dbReference type="FunFam" id="2.30.30.280:FF:000001">
    <property type="entry name" value="tRNA-specific 2-thiouridylase MnmA"/>
    <property type="match status" value="1"/>
</dbReference>
<dbReference type="FunFam" id="2.40.30.10:FF:000023">
    <property type="entry name" value="tRNA-specific 2-thiouridylase MnmA"/>
    <property type="match status" value="1"/>
</dbReference>
<dbReference type="FunFam" id="3.40.50.620:FF:000302">
    <property type="entry name" value="tRNA-specific 2-thiouridylase MnmA"/>
    <property type="match status" value="1"/>
</dbReference>
<dbReference type="Gene3D" id="2.30.30.280">
    <property type="entry name" value="Adenine nucleotide alpha hydrolases-like domains"/>
    <property type="match status" value="1"/>
</dbReference>
<dbReference type="Gene3D" id="3.40.50.620">
    <property type="entry name" value="HUPs"/>
    <property type="match status" value="1"/>
</dbReference>
<dbReference type="Gene3D" id="2.40.30.10">
    <property type="entry name" value="Translation factors"/>
    <property type="match status" value="1"/>
</dbReference>
<dbReference type="HAMAP" id="MF_00144">
    <property type="entry name" value="tRNA_thiouridyl_MnmA"/>
    <property type="match status" value="1"/>
</dbReference>
<dbReference type="InterPro" id="IPR004506">
    <property type="entry name" value="MnmA-like"/>
</dbReference>
<dbReference type="InterPro" id="IPR046885">
    <property type="entry name" value="MnmA-like_C"/>
</dbReference>
<dbReference type="InterPro" id="IPR046884">
    <property type="entry name" value="MnmA-like_central"/>
</dbReference>
<dbReference type="InterPro" id="IPR023382">
    <property type="entry name" value="MnmA-like_central_sf"/>
</dbReference>
<dbReference type="InterPro" id="IPR014729">
    <property type="entry name" value="Rossmann-like_a/b/a_fold"/>
</dbReference>
<dbReference type="NCBIfam" id="NF001138">
    <property type="entry name" value="PRK00143.1"/>
    <property type="match status" value="1"/>
</dbReference>
<dbReference type="NCBIfam" id="TIGR00420">
    <property type="entry name" value="trmU"/>
    <property type="match status" value="1"/>
</dbReference>
<dbReference type="PANTHER" id="PTHR11933:SF5">
    <property type="entry name" value="MITOCHONDRIAL TRNA-SPECIFIC 2-THIOURIDYLASE 1"/>
    <property type="match status" value="1"/>
</dbReference>
<dbReference type="PANTHER" id="PTHR11933">
    <property type="entry name" value="TRNA 5-METHYLAMINOMETHYL-2-THIOURIDYLATE -METHYLTRANSFERASE"/>
    <property type="match status" value="1"/>
</dbReference>
<dbReference type="Pfam" id="PF03054">
    <property type="entry name" value="tRNA_Me_trans"/>
    <property type="match status" value="1"/>
</dbReference>
<dbReference type="Pfam" id="PF20258">
    <property type="entry name" value="tRNA_Me_trans_C"/>
    <property type="match status" value="1"/>
</dbReference>
<dbReference type="Pfam" id="PF20259">
    <property type="entry name" value="tRNA_Me_trans_M"/>
    <property type="match status" value="1"/>
</dbReference>
<dbReference type="SUPFAM" id="SSF52402">
    <property type="entry name" value="Adenine nucleotide alpha hydrolases-like"/>
    <property type="match status" value="1"/>
</dbReference>
<protein>
    <recommendedName>
        <fullName evidence="1">tRNA-specific 2-thiouridylase MnmA</fullName>
        <ecNumber evidence="1">2.8.1.13</ecNumber>
    </recommendedName>
</protein>
<gene>
    <name evidence="1" type="primary">mnmA</name>
    <name type="synonym">trmU</name>
    <name type="ordered locus">all1359</name>
</gene>